<name>INTR_ECOLI</name>
<dbReference type="EMBL" id="U00096">
    <property type="protein sequence ID" value="AAC74427.1"/>
    <property type="molecule type" value="Genomic_DNA"/>
</dbReference>
<dbReference type="EMBL" id="AP009048">
    <property type="protein sequence ID" value="BAE76408.1"/>
    <property type="molecule type" value="Genomic_DNA"/>
</dbReference>
<dbReference type="PIR" id="D64884">
    <property type="entry name" value="D64884"/>
</dbReference>
<dbReference type="RefSeq" id="NP_415861.1">
    <property type="nucleotide sequence ID" value="NC_000913.3"/>
</dbReference>
<dbReference type="RefSeq" id="WP_000040852.1">
    <property type="nucleotide sequence ID" value="NZ_JACEFS010000049.1"/>
</dbReference>
<dbReference type="SMR" id="P76056"/>
<dbReference type="BioGRID" id="4261947">
    <property type="interactions" value="15"/>
</dbReference>
<dbReference type="FunCoup" id="P76056">
    <property type="interactions" value="100"/>
</dbReference>
<dbReference type="IntAct" id="P76056">
    <property type="interactions" value="6"/>
</dbReference>
<dbReference type="STRING" id="511145.b1345"/>
<dbReference type="PaxDb" id="511145-b1345"/>
<dbReference type="EnsemblBacteria" id="AAC74427">
    <property type="protein sequence ID" value="AAC74427"/>
    <property type="gene ID" value="b1345"/>
</dbReference>
<dbReference type="GeneID" id="946976"/>
<dbReference type="KEGG" id="ecj:JW1339"/>
<dbReference type="KEGG" id="eco:b1345"/>
<dbReference type="PATRIC" id="fig|1411691.4.peg.931"/>
<dbReference type="EchoBASE" id="EB3141"/>
<dbReference type="eggNOG" id="COG0582">
    <property type="taxonomic scope" value="Bacteria"/>
</dbReference>
<dbReference type="HOGENOM" id="CLU_027562_8_1_6"/>
<dbReference type="InParanoid" id="P76056"/>
<dbReference type="OMA" id="GIRCREV"/>
<dbReference type="OrthoDB" id="5391994at2"/>
<dbReference type="PhylomeDB" id="P76056"/>
<dbReference type="BioCyc" id="EcoCyc:G6676-MONOMER"/>
<dbReference type="PRO" id="PR:P76056"/>
<dbReference type="Proteomes" id="UP000000625">
    <property type="component" value="Chromosome"/>
</dbReference>
<dbReference type="GO" id="GO:0003677">
    <property type="term" value="F:DNA binding"/>
    <property type="evidence" value="ECO:0007669"/>
    <property type="project" value="UniProtKB-KW"/>
</dbReference>
<dbReference type="GO" id="GO:0009009">
    <property type="term" value="F:site-specific recombinase activity"/>
    <property type="evidence" value="ECO:0000318"/>
    <property type="project" value="GO_Central"/>
</dbReference>
<dbReference type="GO" id="GO:0007059">
    <property type="term" value="P:chromosome segregation"/>
    <property type="evidence" value="ECO:0000318"/>
    <property type="project" value="GO_Central"/>
</dbReference>
<dbReference type="GO" id="GO:0006310">
    <property type="term" value="P:DNA recombination"/>
    <property type="evidence" value="ECO:0000318"/>
    <property type="project" value="GO_Central"/>
</dbReference>
<dbReference type="GO" id="GO:0075713">
    <property type="term" value="P:establishment of integrated proviral latency"/>
    <property type="evidence" value="ECO:0007669"/>
    <property type="project" value="UniProtKB-KW"/>
</dbReference>
<dbReference type="GO" id="GO:0046718">
    <property type="term" value="P:symbiont entry into host cell"/>
    <property type="evidence" value="ECO:0007669"/>
    <property type="project" value="UniProtKB-KW"/>
</dbReference>
<dbReference type="GO" id="GO:0044826">
    <property type="term" value="P:viral genome integration into host DNA"/>
    <property type="evidence" value="ECO:0007669"/>
    <property type="project" value="UniProtKB-KW"/>
</dbReference>
<dbReference type="CDD" id="cd01189">
    <property type="entry name" value="INT_ICEBs1_C_like"/>
    <property type="match status" value="1"/>
</dbReference>
<dbReference type="Gene3D" id="1.10.150.130">
    <property type="match status" value="1"/>
</dbReference>
<dbReference type="Gene3D" id="1.10.443.10">
    <property type="entry name" value="Intergrase catalytic core"/>
    <property type="match status" value="1"/>
</dbReference>
<dbReference type="InterPro" id="IPR044068">
    <property type="entry name" value="CB"/>
</dbReference>
<dbReference type="InterPro" id="IPR011010">
    <property type="entry name" value="DNA_brk_join_enz"/>
</dbReference>
<dbReference type="InterPro" id="IPR013762">
    <property type="entry name" value="Integrase-like_cat_sf"/>
</dbReference>
<dbReference type="InterPro" id="IPR002104">
    <property type="entry name" value="Integrase_catalytic"/>
</dbReference>
<dbReference type="InterPro" id="IPR010998">
    <property type="entry name" value="Integrase_recombinase_N"/>
</dbReference>
<dbReference type="InterPro" id="IPR022000">
    <property type="entry name" value="Min27-like_integrase_DNA_bind"/>
</dbReference>
<dbReference type="InterPro" id="IPR050090">
    <property type="entry name" value="Tyrosine_recombinase_XerCD"/>
</dbReference>
<dbReference type="PANTHER" id="PTHR30349">
    <property type="entry name" value="PHAGE INTEGRASE-RELATED"/>
    <property type="match status" value="1"/>
</dbReference>
<dbReference type="PANTHER" id="PTHR30349:SF36">
    <property type="entry name" value="PROPHAGE INTEGRASE INTR-RELATED"/>
    <property type="match status" value="1"/>
</dbReference>
<dbReference type="Pfam" id="PF12167">
    <property type="entry name" value="Arm-DNA-bind_2"/>
    <property type="match status" value="1"/>
</dbReference>
<dbReference type="Pfam" id="PF00589">
    <property type="entry name" value="Phage_integrase"/>
    <property type="match status" value="1"/>
</dbReference>
<dbReference type="SUPFAM" id="SSF56349">
    <property type="entry name" value="DNA breaking-rejoining enzymes"/>
    <property type="match status" value="1"/>
</dbReference>
<dbReference type="PROSITE" id="PS51900">
    <property type="entry name" value="CB"/>
    <property type="match status" value="1"/>
</dbReference>
<dbReference type="PROSITE" id="PS51898">
    <property type="entry name" value="TYR_RECOMBINASE"/>
    <property type="match status" value="1"/>
</dbReference>
<reference key="1">
    <citation type="journal article" date="1997" name="Science">
        <title>The complete genome sequence of Escherichia coli K-12.</title>
        <authorList>
            <person name="Blattner F.R."/>
            <person name="Plunkett G. III"/>
            <person name="Bloch C.A."/>
            <person name="Perna N.T."/>
            <person name="Burland V."/>
            <person name="Riley M."/>
            <person name="Collado-Vides J."/>
            <person name="Glasner J.D."/>
            <person name="Rode C.K."/>
            <person name="Mayhew G.F."/>
            <person name="Gregor J."/>
            <person name="Davis N.W."/>
            <person name="Kirkpatrick H.A."/>
            <person name="Goeden M.A."/>
            <person name="Rose D.J."/>
            <person name="Mau B."/>
            <person name="Shao Y."/>
        </authorList>
    </citation>
    <scope>NUCLEOTIDE SEQUENCE [LARGE SCALE GENOMIC DNA]</scope>
    <source>
        <strain>K12 / MG1655 / ATCC 47076</strain>
    </source>
</reference>
<reference key="2">
    <citation type="journal article" date="2006" name="Mol. Syst. Biol.">
        <title>Highly accurate genome sequences of Escherichia coli K-12 strains MG1655 and W3110.</title>
        <authorList>
            <person name="Hayashi K."/>
            <person name="Morooka N."/>
            <person name="Yamamoto Y."/>
            <person name="Fujita K."/>
            <person name="Isono K."/>
            <person name="Choi S."/>
            <person name="Ohtsubo E."/>
            <person name="Baba T."/>
            <person name="Wanner B.L."/>
            <person name="Mori H."/>
            <person name="Horiuchi T."/>
        </authorList>
    </citation>
    <scope>NUCLEOTIDE SEQUENCE [LARGE SCALE GENOMIC DNA]</scope>
    <source>
        <strain>K12 / W3110 / ATCC 27325 / DSM 5911</strain>
    </source>
</reference>
<keyword id="KW-0229">DNA integration</keyword>
<keyword id="KW-0233">DNA recombination</keyword>
<keyword id="KW-0238">DNA-binding</keyword>
<keyword id="KW-1185">Reference proteome</keyword>
<keyword id="KW-1179">Viral genome integration</keyword>
<keyword id="KW-1160">Virus entry into host cell</keyword>
<feature type="chain" id="PRO_0000197517" description="Prophage integrase IntR">
    <location>
        <begin position="1"/>
        <end position="411"/>
    </location>
</feature>
<feature type="domain" description="Core-binding (CB)" evidence="3">
    <location>
        <begin position="81"/>
        <end position="176"/>
    </location>
</feature>
<feature type="domain" description="Tyr recombinase" evidence="2">
    <location>
        <begin position="197"/>
        <end position="404"/>
    </location>
</feature>
<feature type="active site" evidence="2">
    <location>
        <position position="231"/>
    </location>
</feature>
<feature type="active site" evidence="2">
    <location>
        <position position="266"/>
    </location>
</feature>
<feature type="active site" evidence="2">
    <location>
        <position position="358"/>
    </location>
</feature>
<feature type="active site" evidence="2">
    <location>
        <position position="381"/>
    </location>
</feature>
<feature type="active site" description="O-(3'-phospho-DNA)-tyrosine intermediate" evidence="2">
    <location>
        <position position="391"/>
    </location>
</feature>
<organism>
    <name type="scientific">Escherichia coli (strain K12)</name>
    <dbReference type="NCBI Taxonomy" id="83333"/>
    <lineage>
        <taxon>Bacteria</taxon>
        <taxon>Pseudomonadati</taxon>
        <taxon>Pseudomonadota</taxon>
        <taxon>Gammaproteobacteria</taxon>
        <taxon>Enterobacterales</taxon>
        <taxon>Enterobacteriaceae</taxon>
        <taxon>Escherichia</taxon>
    </lineage>
</organism>
<sequence>MSKLPTGVEIRGRYIRIWFMFRGKRCRETLKGWEITNSNIKKAGNLRALIVHEINSGEFEYLRRFPQSSTGAKMVTTRVIKTFGELCDIWTKIKETELTTNTMKKTKSQLKTLRIIICESTPISHIRYSDILNYRNELLHGETLYLDNPRSNKKGRTVRTVDNYIALLCSLLRFAYQSGFISTKPFEGVKKLQRNRIKPDPLSKTEFNALMESEKGQSQNLWKFAVYSGLRHGELAALAWEDVDLEKGIVNVRRNLTILDMFGPPKTNAGIRTVTLLQPALEALKEQYKLTGHHRKSEITFYHREYGRTEKQKLHFVFMPRVCNGKQKPYYSVSSLGARWNAAVKRAGIRRRNPYHTRHTFACWLLTAGANPAFIASQMGHETAQMVYEIYGMWIDDMNDEQIAMLNARLS</sequence>
<accession>P76056</accession>
<accession>Q2MBE8</accession>
<evidence type="ECO:0000250" key="1"/>
<evidence type="ECO:0000255" key="2">
    <source>
        <dbReference type="PROSITE-ProRule" id="PRU01246"/>
    </source>
</evidence>
<evidence type="ECO:0000255" key="3">
    <source>
        <dbReference type="PROSITE-ProRule" id="PRU01248"/>
    </source>
</evidence>
<evidence type="ECO:0000305" key="4"/>
<protein>
    <recommendedName>
        <fullName evidence="4">Prophage integrase IntR</fullName>
    </recommendedName>
    <alternativeName>
        <fullName>Putative lambdoid prophage Rac integrase</fullName>
    </alternativeName>
</protein>
<proteinExistence type="inferred from homology"/>
<comment type="function">
    <text evidence="1">Integrase is necessary for integration of the phage into the host genome by site-specific recombination. In conjunction with excisionase, integrase is also necessary for excision of the prophage from the host genome (By similarity).</text>
</comment>
<comment type="similarity">
    <text evidence="4">Belongs to the 'phage' integrase family.</text>
</comment>
<gene>
    <name type="primary">intR</name>
    <name type="synonym">ydaP</name>
    <name type="ordered locus">b1345</name>
    <name type="ordered locus">JW1339</name>
</gene>